<reference evidence="9 10" key="1">
    <citation type="journal article" date="2004" name="Biochem. Biophys. Res. Commun.">
        <title>Expression of zebrafish glutamate receptor delta2 in neurons with cerebellum-like wiring.</title>
        <authorList>
            <person name="Mikami Y."/>
            <person name="Yoshida T."/>
            <person name="Matsuda N."/>
            <person name="Mishina M."/>
        </authorList>
    </citation>
    <scope>NUCLEOTIDE SEQUENCE [MRNA]</scope>
    <scope>TISSUE SPECIFICITY</scope>
</reference>
<feature type="signal peptide" evidence="5">
    <location>
        <begin position="1"/>
        <end position="23"/>
    </location>
</feature>
<feature type="chain" id="PRO_0000011567" description="Glutamate receptor ionotropic, delta-2">
    <location>
        <begin position="24"/>
        <end position="1009"/>
    </location>
</feature>
<feature type="topological domain" description="Extracellular" evidence="5">
    <location>
        <begin position="24"/>
        <end position="566"/>
    </location>
</feature>
<feature type="transmembrane region" description="Helical" evidence="5">
    <location>
        <begin position="567"/>
        <end position="587"/>
    </location>
</feature>
<feature type="topological domain" description="Cytoplasmic" evidence="5">
    <location>
        <begin position="588"/>
        <end position="635"/>
    </location>
</feature>
<feature type="transmembrane region" description="Helical" evidence="5">
    <location>
        <begin position="636"/>
        <end position="656"/>
    </location>
</feature>
<feature type="topological domain" description="Extracellular" evidence="5">
    <location>
        <begin position="657"/>
        <end position="830"/>
    </location>
</feature>
<feature type="transmembrane region" description="Helical" evidence="5">
    <location>
        <begin position="831"/>
        <end position="851"/>
    </location>
</feature>
<feature type="topological domain" description="Cytoplasmic" evidence="5">
    <location>
        <begin position="852"/>
        <end position="1009"/>
    </location>
</feature>
<feature type="region of interest" description="Disordered" evidence="7">
    <location>
        <begin position="989"/>
        <end position="1009"/>
    </location>
</feature>
<feature type="binding site" evidence="4">
    <location>
        <position position="531"/>
    </location>
    <ligand>
        <name>Ca(2+)</name>
        <dbReference type="ChEBI" id="CHEBI:29108"/>
        <label>1</label>
    </ligand>
</feature>
<feature type="binding site" evidence="4">
    <location>
        <position position="534"/>
    </location>
    <ligand>
        <name>Ca(2+)</name>
        <dbReference type="ChEBI" id="CHEBI:29108"/>
        <label>1</label>
    </ligand>
</feature>
<feature type="binding site" evidence="4">
    <location>
        <position position="535"/>
    </location>
    <ligand>
        <name>Ca(2+)</name>
        <dbReference type="ChEBI" id="CHEBI:29108"/>
        <label>1</label>
    </ligand>
</feature>
<feature type="binding site" evidence="4">
    <location>
        <position position="753"/>
    </location>
    <ligand>
        <name>Ca(2+)</name>
        <dbReference type="ChEBI" id="CHEBI:29108"/>
        <label>2</label>
    </ligand>
</feature>
<feature type="binding site" evidence="4">
    <location>
        <position position="755"/>
    </location>
    <ligand>
        <name>Ca(2+)</name>
        <dbReference type="ChEBI" id="CHEBI:29108"/>
        <label>2</label>
    </ligand>
</feature>
<feature type="binding site" evidence="4">
    <location>
        <position position="757"/>
    </location>
    <ligand>
        <name>Ca(2+)</name>
        <dbReference type="ChEBI" id="CHEBI:29108"/>
        <label>2</label>
    </ligand>
</feature>
<feature type="glycosylation site" description="N-linked (GlcNAc...) asparagine" evidence="6">
    <location>
        <position position="293"/>
    </location>
</feature>
<feature type="glycosylation site" description="N-linked (GlcNAc...) asparagine" evidence="6">
    <location>
        <position position="306"/>
    </location>
</feature>
<feature type="glycosylation site" description="N-linked (GlcNAc...) asparagine" evidence="6">
    <location>
        <position position="390"/>
    </location>
</feature>
<feature type="glycosylation site" description="N-linked (GlcNAc...) asparagine" evidence="6">
    <location>
        <position position="426"/>
    </location>
</feature>
<feature type="glycosylation site" description="N-linked (GlcNAc...) asparagine" evidence="6">
    <location>
        <position position="713"/>
    </location>
</feature>
<dbReference type="EMBL" id="AB154207">
    <property type="protein sequence ID" value="BAD36785.1"/>
    <property type="molecule type" value="mRNA"/>
</dbReference>
<dbReference type="RefSeq" id="NP_001004123.1">
    <property type="nucleotide sequence ID" value="NM_001004123.1"/>
</dbReference>
<dbReference type="SMR" id="Q68Y21"/>
<dbReference type="FunCoup" id="Q68Y21">
    <property type="interactions" value="169"/>
</dbReference>
<dbReference type="STRING" id="7955.ENSDARP00000116997"/>
<dbReference type="GlyCosmos" id="Q68Y21">
    <property type="glycosylation" value="5 sites, No reported glycans"/>
</dbReference>
<dbReference type="PaxDb" id="7955-ENSDARP00000116997"/>
<dbReference type="GeneID" id="448841"/>
<dbReference type="KEGG" id="dre:448841"/>
<dbReference type="AGR" id="ZFIN:ZDB-GENE-040913-1"/>
<dbReference type="CTD" id="2895"/>
<dbReference type="ZFIN" id="ZDB-GENE-040913-1">
    <property type="gene designation" value="grid2"/>
</dbReference>
<dbReference type="eggNOG" id="KOG1052">
    <property type="taxonomic scope" value="Eukaryota"/>
</dbReference>
<dbReference type="InParanoid" id="Q68Y21"/>
<dbReference type="OrthoDB" id="5984008at2759"/>
<dbReference type="PhylomeDB" id="Q68Y21"/>
<dbReference type="PRO" id="PR:Q68Y21"/>
<dbReference type="Proteomes" id="UP000000437">
    <property type="component" value="Alternate scaffold 8"/>
</dbReference>
<dbReference type="Proteomes" id="UP000000437">
    <property type="component" value="Chromosome 8"/>
</dbReference>
<dbReference type="GO" id="GO:0032281">
    <property type="term" value="C:AMPA glutamate receptor complex"/>
    <property type="evidence" value="ECO:0000318"/>
    <property type="project" value="GO_Central"/>
</dbReference>
<dbReference type="GO" id="GO:0043197">
    <property type="term" value="C:dendritic spine"/>
    <property type="evidence" value="ECO:0000318"/>
    <property type="project" value="GO_Central"/>
</dbReference>
<dbReference type="GO" id="GO:0005886">
    <property type="term" value="C:plasma membrane"/>
    <property type="evidence" value="ECO:0000318"/>
    <property type="project" value="GO_Central"/>
</dbReference>
<dbReference type="GO" id="GO:0098839">
    <property type="term" value="C:postsynaptic density membrane"/>
    <property type="evidence" value="ECO:0000318"/>
    <property type="project" value="GO_Central"/>
</dbReference>
<dbReference type="GO" id="GO:0004971">
    <property type="term" value="F:AMPA glutamate receptor activity"/>
    <property type="evidence" value="ECO:0000318"/>
    <property type="project" value="GO_Central"/>
</dbReference>
<dbReference type="GO" id="GO:0046872">
    <property type="term" value="F:metal ion binding"/>
    <property type="evidence" value="ECO:0007669"/>
    <property type="project" value="UniProtKB-KW"/>
</dbReference>
<dbReference type="GO" id="GO:1904315">
    <property type="term" value="F:transmitter-gated monoatomic ion channel activity involved in regulation of postsynaptic membrane potential"/>
    <property type="evidence" value="ECO:0000318"/>
    <property type="project" value="GO_Central"/>
</dbReference>
<dbReference type="GO" id="GO:0050804">
    <property type="term" value="P:modulation of chemical synaptic transmission"/>
    <property type="evidence" value="ECO:0000318"/>
    <property type="project" value="GO_Central"/>
</dbReference>
<dbReference type="GO" id="GO:0035249">
    <property type="term" value="P:synaptic transmission, glutamatergic"/>
    <property type="evidence" value="ECO:0000318"/>
    <property type="project" value="GO_Central"/>
</dbReference>
<dbReference type="CDD" id="cd06391">
    <property type="entry name" value="PBP1_iGluR_delta_2"/>
    <property type="match status" value="1"/>
</dbReference>
<dbReference type="CDD" id="cd13731">
    <property type="entry name" value="PBP2_iGluR_delta_2"/>
    <property type="match status" value="1"/>
</dbReference>
<dbReference type="FunFam" id="3.40.190.10:FF:000024">
    <property type="entry name" value="Glutamate receptor, ionotropic, delta 1"/>
    <property type="match status" value="1"/>
</dbReference>
<dbReference type="FunFam" id="3.40.50.2300:FF:000068">
    <property type="entry name" value="Glutamate receptor, ionotropic, delta 1b"/>
    <property type="match status" value="1"/>
</dbReference>
<dbReference type="FunFam" id="1.10.287.70:FF:000045">
    <property type="entry name" value="Glutamate receptor, ionotropic, delta 2"/>
    <property type="match status" value="1"/>
</dbReference>
<dbReference type="FunFam" id="3.40.190.10:FF:000040">
    <property type="entry name" value="Glutamate receptor, ionotropic, delta 2"/>
    <property type="match status" value="1"/>
</dbReference>
<dbReference type="Gene3D" id="1.10.287.70">
    <property type="match status" value="1"/>
</dbReference>
<dbReference type="Gene3D" id="3.40.50.2300">
    <property type="match status" value="2"/>
</dbReference>
<dbReference type="Gene3D" id="3.40.190.10">
    <property type="entry name" value="Periplasmic binding protein-like II"/>
    <property type="match status" value="2"/>
</dbReference>
<dbReference type="InterPro" id="IPR001828">
    <property type="entry name" value="ANF_lig-bd_rcpt"/>
</dbReference>
<dbReference type="InterPro" id="IPR019594">
    <property type="entry name" value="Glu/Gly-bd"/>
</dbReference>
<dbReference type="InterPro" id="IPR001508">
    <property type="entry name" value="Iono_Glu_rcpt_met"/>
</dbReference>
<dbReference type="InterPro" id="IPR015683">
    <property type="entry name" value="Ionotropic_Glu_rcpt"/>
</dbReference>
<dbReference type="InterPro" id="IPR001320">
    <property type="entry name" value="Iontro_rcpt_C"/>
</dbReference>
<dbReference type="InterPro" id="IPR028082">
    <property type="entry name" value="Peripla_BP_I"/>
</dbReference>
<dbReference type="PANTHER" id="PTHR18966">
    <property type="entry name" value="IONOTROPIC GLUTAMATE RECEPTOR"/>
    <property type="match status" value="1"/>
</dbReference>
<dbReference type="Pfam" id="PF01094">
    <property type="entry name" value="ANF_receptor"/>
    <property type="match status" value="1"/>
</dbReference>
<dbReference type="Pfam" id="PF00060">
    <property type="entry name" value="Lig_chan"/>
    <property type="match status" value="1"/>
</dbReference>
<dbReference type="Pfam" id="PF10613">
    <property type="entry name" value="Lig_chan-Glu_bd"/>
    <property type="match status" value="1"/>
</dbReference>
<dbReference type="PRINTS" id="PR00177">
    <property type="entry name" value="NMDARECEPTOR"/>
</dbReference>
<dbReference type="SMART" id="SM00918">
    <property type="entry name" value="Lig_chan-Glu_bd"/>
    <property type="match status" value="1"/>
</dbReference>
<dbReference type="SMART" id="SM00079">
    <property type="entry name" value="PBPe"/>
    <property type="match status" value="1"/>
</dbReference>
<dbReference type="SUPFAM" id="SSF53822">
    <property type="entry name" value="Periplasmic binding protein-like I"/>
    <property type="match status" value="1"/>
</dbReference>
<dbReference type="SUPFAM" id="SSF53850">
    <property type="entry name" value="Periplasmic binding protein-like II"/>
    <property type="match status" value="1"/>
</dbReference>
<proteinExistence type="evidence at transcript level"/>
<organism>
    <name type="scientific">Danio rerio</name>
    <name type="common">Zebrafish</name>
    <name type="synonym">Brachydanio rerio</name>
    <dbReference type="NCBI Taxonomy" id="7955"/>
    <lineage>
        <taxon>Eukaryota</taxon>
        <taxon>Metazoa</taxon>
        <taxon>Chordata</taxon>
        <taxon>Craniata</taxon>
        <taxon>Vertebrata</taxon>
        <taxon>Euteleostomi</taxon>
        <taxon>Actinopterygii</taxon>
        <taxon>Neopterygii</taxon>
        <taxon>Teleostei</taxon>
        <taxon>Ostariophysi</taxon>
        <taxon>Cypriniformes</taxon>
        <taxon>Danionidae</taxon>
        <taxon>Danioninae</taxon>
        <taxon>Danio</taxon>
    </lineage>
</organism>
<protein>
    <recommendedName>
        <fullName>Glutamate receptor ionotropic, delta-2</fullName>
        <shortName>GluD2</shortName>
        <shortName>GluR delta-2 subunit</shortName>
    </recommendedName>
</protein>
<evidence type="ECO:0000250" key="1">
    <source>
        <dbReference type="UniProtKB" id="O43424"/>
    </source>
</evidence>
<evidence type="ECO:0000250" key="2">
    <source>
        <dbReference type="UniProtKB" id="Q61625"/>
    </source>
</evidence>
<evidence type="ECO:0000250" key="3">
    <source>
        <dbReference type="UniProtKB" id="Q63226"/>
    </source>
</evidence>
<evidence type="ECO:0000250" key="4">
    <source>
        <dbReference type="UniProtKB" id="Q9ULK0"/>
    </source>
</evidence>
<evidence type="ECO:0000255" key="5"/>
<evidence type="ECO:0000255" key="6">
    <source>
        <dbReference type="PROSITE-ProRule" id="PRU00498"/>
    </source>
</evidence>
<evidence type="ECO:0000256" key="7">
    <source>
        <dbReference type="SAM" id="MobiDB-lite"/>
    </source>
</evidence>
<evidence type="ECO:0000269" key="8">
    <source>
    </source>
</evidence>
<evidence type="ECO:0000305" key="9"/>
<evidence type="ECO:0000312" key="10">
    <source>
        <dbReference type="EMBL" id="BAD36785.1"/>
    </source>
</evidence>
<evidence type="ECO:0000312" key="11">
    <source>
        <dbReference type="ZFIN" id="ZDB-GENE-040913-1"/>
    </source>
</evidence>
<gene>
    <name evidence="10" type="primary">grid2</name>
    <name evidence="11" type="synonym">glurd2</name>
</gene>
<name>GRID2_DANRE</name>
<comment type="function">
    <text evidence="1 2">Member of the ionotropic glutamate receptor family, which plays a crucial role in synaptic organization and signal transduction in the central nervous system. Although it shares structural features with ionotropic glutamate receptors, does not bind glutamate as a primary ligand (By similarity). Promotes synaptogenesis and mediates the D-Serine-dependent long term depression signals and AMPA receptor endocytosis of cerebellar parallel fiber-Purkinje cell (PF-PC) synapses through the NRX1B-CBLN1-GRID2 triad complex (By similarity). In the presence of neurexins and cerebellins, forms cation-selective channels that are proposed to be gated by glycine and D-serine. However, recent research disputes this ligand-gated cation channel activity. Cation-selective ion channel activity can be triggered by GRM1 in Purkinje cells (By similarity).</text>
</comment>
<comment type="catalytic activity">
    <reaction evidence="2">
        <text>Ca(2+)(in) = Ca(2+)(out)</text>
        <dbReference type="Rhea" id="RHEA:29671"/>
        <dbReference type="ChEBI" id="CHEBI:29108"/>
    </reaction>
</comment>
<comment type="catalytic activity">
    <reaction evidence="2">
        <text>Na(+)(in) = Na(+)(out)</text>
        <dbReference type="Rhea" id="RHEA:34963"/>
        <dbReference type="ChEBI" id="CHEBI:29101"/>
    </reaction>
</comment>
<comment type="subunit">
    <text evidence="1 2 3">Tetramer; dimer of dimers (By similarity).</text>
</comment>
<comment type="subcellular location">
    <subcellularLocation>
        <location evidence="2">Postsynaptic cell membrane</location>
        <topology evidence="5">Multi-pass membrane protein</topology>
    </subcellularLocation>
</comment>
<comment type="tissue specificity">
    <text evidence="8">Expressed in cerebellar Purkinje cells, in crest cells in the medial octavolateral nucleus and in type I neurons of the optic tectum.</text>
</comment>
<comment type="domain">
    <text evidence="2">The PDZ-binding motif mediates interaction with GOPC.</text>
</comment>
<comment type="similarity">
    <text evidence="9">Belongs to the glutamate-gated ion channel (TC 1.A.10.1) family. GRID2 subfamily.</text>
</comment>
<sequence>MKVFPAVLFLITFWSLEWEPVLPDSIIHIGAIFDESAKKDDEVFRMAVADLNLNNEILETEKITVSVEFVDGNNPFQAVQEACELMNRGILALVSSIGCMSAGSLQSLADAMHIPHLFIQRAPAGTPRSSCPPTTRAQPDDYTLFVRPPVYLNDVIFQVVMEYTWQKFIIFYDTDYDIRGIENFLDQTSQQGMDVSLQKVESNINMMITGMFRTMRVEELHRYRDTLRRAVLFMSPATAKAFITEVVETNLVAFDCQWIIINEEISDMDVQELVMKSIGRLTLVRQTFPLPQNTSQRCVRNNHRINTSLCDPKDPKAQMLEITNRYIYDTVLLLANTFHRKLEDRKWHSMASLSCIRKGSKPWQGGKSMLETVKKGGVSGLTSLLEFNDNGSNPNIHFEILGTNYGEDRGRGVSRLATWDPIHGLNGTLTDRKLENNMRGVVLRVVTVLEEPFVMVSENVLGKPKKYQGFSIDVLDALANYLGFKYEIYVAPDHKYGSQQADGTWNGLIGELVFKRADVGLSALTITPERESVVDFTTRYMDYSVGVLLRKAERTVDMFACLAPFDLSLWACIAGTVLLVGTLVYLLNWLNPPRLPMGSVSSTTLYNSMWFVYGSFVQQGGEVPYTTLATRMMMGVWWLFALIVISSYTANLAAFLTISRIENSIQSLQDLAKQTDLPYGTVLDSAVYDQVRSKGMNPFERDPMYSQMWRMINRTGGAENNVEESKEGIRKVKYGRFAFVWDAAVLEYVAINDEDCSLYTVSNNVADRGYGMAMQHGSPYRDIFSQRILELQQNGDMDILKLKWWPRDSPCDLYSPVGTRKSGSALDIHSFAGVFFVLAAGVVLSCLIATVETWWTRRKGSRVPSKEDDKEIDLEHLHHRVNSLCTEDESPHKQFSTSSIDLTPLDMDSLPAARQALEQISDFRNTHITTTTFIPEQIQTLSRSLSAKAAAGFAFGAVQDHRTGGPFRQRAPNGGFFRSPVKTMSSIPYQPTPAPNFSYGNDPDRGTSI</sequence>
<accession>Q68Y21</accession>
<keyword id="KW-0106">Calcium</keyword>
<keyword id="KW-1003">Cell membrane</keyword>
<keyword id="KW-0325">Glycoprotein</keyword>
<keyword id="KW-0407">Ion channel</keyword>
<keyword id="KW-0406">Ion transport</keyword>
<keyword id="KW-1071">Ligand-gated ion channel</keyword>
<keyword id="KW-0472">Membrane</keyword>
<keyword id="KW-0479">Metal-binding</keyword>
<keyword id="KW-0628">Postsynaptic cell membrane</keyword>
<keyword id="KW-0675">Receptor</keyword>
<keyword id="KW-1185">Reference proteome</keyword>
<keyword id="KW-0732">Signal</keyword>
<keyword id="KW-0770">Synapse</keyword>
<keyword id="KW-0812">Transmembrane</keyword>
<keyword id="KW-1133">Transmembrane helix</keyword>
<keyword id="KW-0813">Transport</keyword>